<evidence type="ECO:0000255" key="1">
    <source>
        <dbReference type="HAMAP-Rule" id="MF_00146"/>
    </source>
</evidence>
<name>DCD_RHORT</name>
<proteinExistence type="inferred from homology"/>
<reference key="1">
    <citation type="journal article" date="2011" name="Stand. Genomic Sci.">
        <title>Complete genome sequence of Rhodospirillum rubrum type strain (S1).</title>
        <authorList>
            <person name="Munk A.C."/>
            <person name="Copeland A."/>
            <person name="Lucas S."/>
            <person name="Lapidus A."/>
            <person name="Del Rio T.G."/>
            <person name="Barry K."/>
            <person name="Detter J.C."/>
            <person name="Hammon N."/>
            <person name="Israni S."/>
            <person name="Pitluck S."/>
            <person name="Brettin T."/>
            <person name="Bruce D."/>
            <person name="Han C."/>
            <person name="Tapia R."/>
            <person name="Gilna P."/>
            <person name="Schmutz J."/>
            <person name="Larimer F."/>
            <person name="Land M."/>
            <person name="Kyrpides N.C."/>
            <person name="Mavromatis K."/>
            <person name="Richardson P."/>
            <person name="Rohde M."/>
            <person name="Goeker M."/>
            <person name="Klenk H.P."/>
            <person name="Zhang Y."/>
            <person name="Roberts G.P."/>
            <person name="Reslewic S."/>
            <person name="Schwartz D.C."/>
        </authorList>
    </citation>
    <scope>NUCLEOTIDE SEQUENCE [LARGE SCALE GENOMIC DNA]</scope>
    <source>
        <strain>ATCC 11170 / ATH 1.1.1 / DSM 467 / LMG 4362 / NCIMB 8255 / S1</strain>
    </source>
</reference>
<protein>
    <recommendedName>
        <fullName evidence="1">dCTP deaminase</fullName>
        <ecNumber evidence="1">3.5.4.13</ecNumber>
    </recommendedName>
    <alternativeName>
        <fullName evidence="1">Deoxycytidine triphosphate deaminase</fullName>
    </alternativeName>
</protein>
<gene>
    <name evidence="1" type="primary">dcd</name>
    <name type="ordered locus">Rru_A2794</name>
</gene>
<organism>
    <name type="scientific">Rhodospirillum rubrum (strain ATCC 11170 / ATH 1.1.1 / DSM 467 / LMG 4362 / NCIMB 8255 / S1)</name>
    <dbReference type="NCBI Taxonomy" id="269796"/>
    <lineage>
        <taxon>Bacteria</taxon>
        <taxon>Pseudomonadati</taxon>
        <taxon>Pseudomonadota</taxon>
        <taxon>Alphaproteobacteria</taxon>
        <taxon>Rhodospirillales</taxon>
        <taxon>Rhodospirillaceae</taxon>
        <taxon>Rhodospirillum</taxon>
    </lineage>
</organism>
<comment type="function">
    <text evidence="1">Catalyzes the deamination of dCTP to dUTP.</text>
</comment>
<comment type="catalytic activity">
    <reaction evidence="1">
        <text>dCTP + H2O + H(+) = dUTP + NH4(+)</text>
        <dbReference type="Rhea" id="RHEA:22680"/>
        <dbReference type="ChEBI" id="CHEBI:15377"/>
        <dbReference type="ChEBI" id="CHEBI:15378"/>
        <dbReference type="ChEBI" id="CHEBI:28938"/>
        <dbReference type="ChEBI" id="CHEBI:61481"/>
        <dbReference type="ChEBI" id="CHEBI:61555"/>
        <dbReference type="EC" id="3.5.4.13"/>
    </reaction>
</comment>
<comment type="pathway">
    <text evidence="1">Pyrimidine metabolism; dUMP biosynthesis; dUMP from dCTP (dUTP route): step 1/2.</text>
</comment>
<comment type="subunit">
    <text evidence="1">Homotrimer.</text>
</comment>
<comment type="similarity">
    <text evidence="1">Belongs to the dCTP deaminase family.</text>
</comment>
<accession>Q2RQK4</accession>
<keyword id="KW-0378">Hydrolase</keyword>
<keyword id="KW-0546">Nucleotide metabolism</keyword>
<keyword id="KW-0547">Nucleotide-binding</keyword>
<keyword id="KW-1185">Reference proteome</keyword>
<dbReference type="EC" id="3.5.4.13" evidence="1"/>
<dbReference type="EMBL" id="CP000230">
    <property type="protein sequence ID" value="ABC23591.1"/>
    <property type="molecule type" value="Genomic_DNA"/>
</dbReference>
<dbReference type="RefSeq" id="WP_011390604.1">
    <property type="nucleotide sequence ID" value="NC_007643.1"/>
</dbReference>
<dbReference type="RefSeq" id="YP_427878.1">
    <property type="nucleotide sequence ID" value="NC_007643.1"/>
</dbReference>
<dbReference type="SMR" id="Q2RQK4"/>
<dbReference type="STRING" id="269796.Rru_A2794"/>
<dbReference type="EnsemblBacteria" id="ABC23591">
    <property type="protein sequence ID" value="ABC23591"/>
    <property type="gene ID" value="Rru_A2794"/>
</dbReference>
<dbReference type="KEGG" id="rru:Rru_A2794"/>
<dbReference type="PATRIC" id="fig|269796.9.peg.2900"/>
<dbReference type="eggNOG" id="COG0717">
    <property type="taxonomic scope" value="Bacteria"/>
</dbReference>
<dbReference type="HOGENOM" id="CLU_087476_2_0_5"/>
<dbReference type="PhylomeDB" id="Q2RQK4"/>
<dbReference type="UniPathway" id="UPA00610">
    <property type="reaction ID" value="UER00665"/>
</dbReference>
<dbReference type="Proteomes" id="UP000001929">
    <property type="component" value="Chromosome"/>
</dbReference>
<dbReference type="GO" id="GO:0008829">
    <property type="term" value="F:dCTP deaminase activity"/>
    <property type="evidence" value="ECO:0007669"/>
    <property type="project" value="UniProtKB-UniRule"/>
</dbReference>
<dbReference type="GO" id="GO:0000166">
    <property type="term" value="F:nucleotide binding"/>
    <property type="evidence" value="ECO:0007669"/>
    <property type="project" value="UniProtKB-KW"/>
</dbReference>
<dbReference type="GO" id="GO:0006226">
    <property type="term" value="P:dUMP biosynthetic process"/>
    <property type="evidence" value="ECO:0007669"/>
    <property type="project" value="UniProtKB-UniPathway"/>
</dbReference>
<dbReference type="GO" id="GO:0006229">
    <property type="term" value="P:dUTP biosynthetic process"/>
    <property type="evidence" value="ECO:0007669"/>
    <property type="project" value="UniProtKB-UniRule"/>
</dbReference>
<dbReference type="GO" id="GO:0015949">
    <property type="term" value="P:nucleobase-containing small molecule interconversion"/>
    <property type="evidence" value="ECO:0007669"/>
    <property type="project" value="TreeGrafter"/>
</dbReference>
<dbReference type="CDD" id="cd07557">
    <property type="entry name" value="trimeric_dUTPase"/>
    <property type="match status" value="1"/>
</dbReference>
<dbReference type="Gene3D" id="2.70.40.10">
    <property type="match status" value="1"/>
</dbReference>
<dbReference type="HAMAP" id="MF_00146">
    <property type="entry name" value="dCTP_deaminase"/>
    <property type="match status" value="1"/>
</dbReference>
<dbReference type="InterPro" id="IPR011962">
    <property type="entry name" value="dCTP_deaminase"/>
</dbReference>
<dbReference type="InterPro" id="IPR036157">
    <property type="entry name" value="dUTPase-like_sf"/>
</dbReference>
<dbReference type="InterPro" id="IPR033704">
    <property type="entry name" value="dUTPase_trimeric"/>
</dbReference>
<dbReference type="NCBIfam" id="TIGR02274">
    <property type="entry name" value="dCTP_deam"/>
    <property type="match status" value="1"/>
</dbReference>
<dbReference type="PANTHER" id="PTHR42680">
    <property type="entry name" value="DCTP DEAMINASE"/>
    <property type="match status" value="1"/>
</dbReference>
<dbReference type="PANTHER" id="PTHR42680:SF3">
    <property type="entry name" value="DCTP DEAMINASE"/>
    <property type="match status" value="1"/>
</dbReference>
<dbReference type="Pfam" id="PF22769">
    <property type="entry name" value="DCD"/>
    <property type="match status" value="1"/>
</dbReference>
<dbReference type="SUPFAM" id="SSF51283">
    <property type="entry name" value="dUTPase-like"/>
    <property type="match status" value="1"/>
</dbReference>
<feature type="chain" id="PRO_1000009797" description="dCTP deaminase">
    <location>
        <begin position="1"/>
        <end position="195"/>
    </location>
</feature>
<feature type="active site" description="Proton donor/acceptor" evidence="1">
    <location>
        <position position="137"/>
    </location>
</feature>
<feature type="binding site" evidence="1">
    <location>
        <begin position="109"/>
        <end position="114"/>
    </location>
    <ligand>
        <name>dCTP</name>
        <dbReference type="ChEBI" id="CHEBI:61481"/>
    </ligand>
</feature>
<feature type="binding site" evidence="1">
    <location>
        <position position="127"/>
    </location>
    <ligand>
        <name>dCTP</name>
        <dbReference type="ChEBI" id="CHEBI:61481"/>
    </ligand>
</feature>
<feature type="binding site" evidence="1">
    <location>
        <begin position="135"/>
        <end position="137"/>
    </location>
    <ligand>
        <name>dCTP</name>
        <dbReference type="ChEBI" id="CHEBI:61481"/>
    </ligand>
</feature>
<feature type="binding site" evidence="1">
    <location>
        <position position="170"/>
    </location>
    <ligand>
        <name>dCTP</name>
        <dbReference type="ChEBI" id="CHEBI:61481"/>
    </ligand>
</feature>
<feature type="binding site" evidence="1">
    <location>
        <position position="177"/>
    </location>
    <ligand>
        <name>dCTP</name>
        <dbReference type="ChEBI" id="CHEBI:61481"/>
    </ligand>
</feature>
<feature type="binding site" evidence="1">
    <location>
        <position position="181"/>
    </location>
    <ligand>
        <name>dCTP</name>
        <dbReference type="ChEBI" id="CHEBI:61481"/>
    </ligand>
</feature>
<sequence>MKLSDTDIRRYMAEGRIAIDPVPGEDAIGAMSVDLQLGDSFRVFVPGKVSHVDLAPPGGIKGRDIEALMGHVEVGENEAFYLHPGEFALGITIQRVRLPADVAGRLDGRSSLARLGLMVHATAHTIDPGWDGRITLEFFNCGPLPLAMRPGMRICAISFEALMSPTSKPYAASPTAKYKDQLAPLPSRLASDQSA</sequence>